<accession>P0DD73</accession>
<accession>P59007</accession>
<accession>P65939</accession>
<accession>Q9A151</accession>
<keyword id="KW-0021">Allosteric enzyme</keyword>
<keyword id="KW-0067">ATP-binding</keyword>
<keyword id="KW-0963">Cytoplasm</keyword>
<keyword id="KW-0418">Kinase</keyword>
<keyword id="KW-0547">Nucleotide-binding</keyword>
<keyword id="KW-0665">Pyrimidine biosynthesis</keyword>
<keyword id="KW-0808">Transferase</keyword>
<gene>
    <name evidence="1" type="primary">pyrH</name>
    <name type="ordered locus">SPs1531</name>
</gene>
<dbReference type="EC" id="2.7.4.22" evidence="1"/>
<dbReference type="EMBL" id="BA000034">
    <property type="protein sequence ID" value="BAC64626.1"/>
    <property type="status" value="ALT_INIT"/>
    <property type="molecule type" value="Genomic_DNA"/>
</dbReference>
<dbReference type="RefSeq" id="WP_002985765.1">
    <property type="nucleotide sequence ID" value="NC_004606.1"/>
</dbReference>
<dbReference type="SMR" id="P0DD73"/>
<dbReference type="GeneID" id="69901300"/>
<dbReference type="KEGG" id="sps:SPs1531"/>
<dbReference type="HOGENOM" id="CLU_033861_0_1_9"/>
<dbReference type="UniPathway" id="UPA00159">
    <property type="reaction ID" value="UER00275"/>
</dbReference>
<dbReference type="GO" id="GO:0005737">
    <property type="term" value="C:cytoplasm"/>
    <property type="evidence" value="ECO:0007669"/>
    <property type="project" value="UniProtKB-SubCell"/>
</dbReference>
<dbReference type="GO" id="GO:0005524">
    <property type="term" value="F:ATP binding"/>
    <property type="evidence" value="ECO:0007669"/>
    <property type="project" value="UniProtKB-KW"/>
</dbReference>
<dbReference type="GO" id="GO:0033862">
    <property type="term" value="F:UMP kinase activity"/>
    <property type="evidence" value="ECO:0007669"/>
    <property type="project" value="UniProtKB-EC"/>
</dbReference>
<dbReference type="GO" id="GO:0044210">
    <property type="term" value="P:'de novo' CTP biosynthetic process"/>
    <property type="evidence" value="ECO:0007669"/>
    <property type="project" value="UniProtKB-UniRule"/>
</dbReference>
<dbReference type="GO" id="GO:0006225">
    <property type="term" value="P:UDP biosynthetic process"/>
    <property type="evidence" value="ECO:0007669"/>
    <property type="project" value="TreeGrafter"/>
</dbReference>
<dbReference type="CDD" id="cd04254">
    <property type="entry name" value="AAK_UMPK-PyrH-Ec"/>
    <property type="match status" value="1"/>
</dbReference>
<dbReference type="FunFam" id="3.40.1160.10:FF:000019">
    <property type="entry name" value="Uridylate kinase"/>
    <property type="match status" value="1"/>
</dbReference>
<dbReference type="Gene3D" id="3.40.1160.10">
    <property type="entry name" value="Acetylglutamate kinase-like"/>
    <property type="match status" value="1"/>
</dbReference>
<dbReference type="HAMAP" id="MF_01220_B">
    <property type="entry name" value="PyrH_B"/>
    <property type="match status" value="1"/>
</dbReference>
<dbReference type="InterPro" id="IPR036393">
    <property type="entry name" value="AceGlu_kinase-like_sf"/>
</dbReference>
<dbReference type="InterPro" id="IPR001048">
    <property type="entry name" value="Asp/Glu/Uridylate_kinase"/>
</dbReference>
<dbReference type="InterPro" id="IPR011817">
    <property type="entry name" value="Uridylate_kinase"/>
</dbReference>
<dbReference type="InterPro" id="IPR015963">
    <property type="entry name" value="Uridylate_kinase_bac"/>
</dbReference>
<dbReference type="NCBIfam" id="TIGR02075">
    <property type="entry name" value="pyrH_bact"/>
    <property type="match status" value="1"/>
</dbReference>
<dbReference type="PANTHER" id="PTHR42833">
    <property type="entry name" value="URIDYLATE KINASE"/>
    <property type="match status" value="1"/>
</dbReference>
<dbReference type="PANTHER" id="PTHR42833:SF4">
    <property type="entry name" value="URIDYLATE KINASE PUMPKIN, CHLOROPLASTIC"/>
    <property type="match status" value="1"/>
</dbReference>
<dbReference type="Pfam" id="PF00696">
    <property type="entry name" value="AA_kinase"/>
    <property type="match status" value="1"/>
</dbReference>
<dbReference type="PIRSF" id="PIRSF005650">
    <property type="entry name" value="Uridylate_kin"/>
    <property type="match status" value="1"/>
</dbReference>
<dbReference type="SUPFAM" id="SSF53633">
    <property type="entry name" value="Carbamate kinase-like"/>
    <property type="match status" value="1"/>
</dbReference>
<name>PYRH_STRPQ</name>
<sequence length="242" mass="25896">MEPKYQRILIKLSGEALAGEKGVGIDIPTVQAIAKEIAEVHVSGVQIALVIGGGNLWRGEPAADAGMDRVQADYTGMLGTVMNALVMADSLQHYGVDTRVQTAIPMQNVAEPYIRGRALRHLEKNRIVVFGAGIGSPYFSTDTTAALRAAEIEADAILMAKNGVDGVYNADPKKDANAVKFDELTHGEVIKRGLKIMDATASTLSMDNDIDLVVFNMNEAGNIQRVVFGEHIGTTVSNKVCD</sequence>
<protein>
    <recommendedName>
        <fullName evidence="1">Uridylate kinase</fullName>
        <shortName evidence="1">UK</shortName>
        <ecNumber evidence="1">2.7.4.22</ecNumber>
    </recommendedName>
    <alternativeName>
        <fullName evidence="1">Uridine monophosphate kinase</fullName>
        <shortName evidence="1">UMP kinase</shortName>
        <shortName evidence="1">UMPK</shortName>
    </alternativeName>
</protein>
<reference key="1">
    <citation type="journal article" date="2003" name="Genome Res.">
        <title>Genome sequence of an M3 strain of Streptococcus pyogenes reveals a large-scale genomic rearrangement in invasive strains and new insights into phage evolution.</title>
        <authorList>
            <person name="Nakagawa I."/>
            <person name="Kurokawa K."/>
            <person name="Yamashita A."/>
            <person name="Nakata M."/>
            <person name="Tomiyasu Y."/>
            <person name="Okahashi N."/>
            <person name="Kawabata S."/>
            <person name="Yamazaki K."/>
            <person name="Shiba T."/>
            <person name="Yasunaga T."/>
            <person name="Hayashi H."/>
            <person name="Hattori M."/>
            <person name="Hamada S."/>
        </authorList>
    </citation>
    <scope>NUCLEOTIDE SEQUENCE [LARGE SCALE GENOMIC DNA]</scope>
    <source>
        <strain>SSI-1</strain>
    </source>
</reference>
<feature type="chain" id="PRO_0000411476" description="Uridylate kinase">
    <location>
        <begin position="1"/>
        <end position="242"/>
    </location>
</feature>
<feature type="region of interest" description="Involved in allosteric activation by GTP" evidence="1">
    <location>
        <begin position="19"/>
        <end position="24"/>
    </location>
</feature>
<feature type="binding site" evidence="1">
    <location>
        <begin position="11"/>
        <end position="14"/>
    </location>
    <ligand>
        <name>ATP</name>
        <dbReference type="ChEBI" id="CHEBI:30616"/>
    </ligand>
</feature>
<feature type="binding site" evidence="1">
    <location>
        <position position="53"/>
    </location>
    <ligand>
        <name>UMP</name>
        <dbReference type="ChEBI" id="CHEBI:57865"/>
    </ligand>
</feature>
<feature type="binding site" evidence="1">
    <location>
        <position position="54"/>
    </location>
    <ligand>
        <name>ATP</name>
        <dbReference type="ChEBI" id="CHEBI:30616"/>
    </ligand>
</feature>
<feature type="binding site" evidence="1">
    <location>
        <position position="58"/>
    </location>
    <ligand>
        <name>ATP</name>
        <dbReference type="ChEBI" id="CHEBI:30616"/>
    </ligand>
</feature>
<feature type="binding site" evidence="1">
    <location>
        <position position="73"/>
    </location>
    <ligand>
        <name>UMP</name>
        <dbReference type="ChEBI" id="CHEBI:57865"/>
    </ligand>
</feature>
<feature type="binding site" evidence="1">
    <location>
        <begin position="134"/>
        <end position="141"/>
    </location>
    <ligand>
        <name>UMP</name>
        <dbReference type="ChEBI" id="CHEBI:57865"/>
    </ligand>
</feature>
<feature type="binding site" evidence="1">
    <location>
        <position position="162"/>
    </location>
    <ligand>
        <name>ATP</name>
        <dbReference type="ChEBI" id="CHEBI:30616"/>
    </ligand>
</feature>
<feature type="binding site" evidence="1">
    <location>
        <position position="168"/>
    </location>
    <ligand>
        <name>ATP</name>
        <dbReference type="ChEBI" id="CHEBI:30616"/>
    </ligand>
</feature>
<feature type="binding site" evidence="1">
    <location>
        <position position="171"/>
    </location>
    <ligand>
        <name>ATP</name>
        <dbReference type="ChEBI" id="CHEBI:30616"/>
    </ligand>
</feature>
<comment type="function">
    <text evidence="1">Catalyzes the reversible phosphorylation of UMP to UDP.</text>
</comment>
<comment type="catalytic activity">
    <reaction evidence="1">
        <text>UMP + ATP = UDP + ADP</text>
        <dbReference type="Rhea" id="RHEA:24400"/>
        <dbReference type="ChEBI" id="CHEBI:30616"/>
        <dbReference type="ChEBI" id="CHEBI:57865"/>
        <dbReference type="ChEBI" id="CHEBI:58223"/>
        <dbReference type="ChEBI" id="CHEBI:456216"/>
        <dbReference type="EC" id="2.7.4.22"/>
    </reaction>
</comment>
<comment type="activity regulation">
    <text evidence="1">Allosterically activated by GTP. Inhibited by UTP.</text>
</comment>
<comment type="pathway">
    <text evidence="1">Pyrimidine metabolism; CTP biosynthesis via de novo pathway; UDP from UMP (UMPK route): step 1/1.</text>
</comment>
<comment type="subunit">
    <text evidence="1">Homohexamer.</text>
</comment>
<comment type="subcellular location">
    <subcellularLocation>
        <location evidence="1">Cytoplasm</location>
    </subcellularLocation>
</comment>
<comment type="similarity">
    <text evidence="1">Belongs to the UMP kinase family.</text>
</comment>
<comment type="sequence caution" evidence="2">
    <conflict type="erroneous initiation">
        <sequence resource="EMBL-CDS" id="BAC64626"/>
    </conflict>
</comment>
<organism>
    <name type="scientific">Streptococcus pyogenes serotype M3 (strain SSI-1)</name>
    <dbReference type="NCBI Taxonomy" id="193567"/>
    <lineage>
        <taxon>Bacteria</taxon>
        <taxon>Bacillati</taxon>
        <taxon>Bacillota</taxon>
        <taxon>Bacilli</taxon>
        <taxon>Lactobacillales</taxon>
        <taxon>Streptococcaceae</taxon>
        <taxon>Streptococcus</taxon>
    </lineage>
</organism>
<proteinExistence type="inferred from homology"/>
<evidence type="ECO:0000255" key="1">
    <source>
        <dbReference type="HAMAP-Rule" id="MF_01220"/>
    </source>
</evidence>
<evidence type="ECO:0000305" key="2"/>